<organism>
    <name type="scientific">Xylella fastidiosa (strain 9a5c)</name>
    <dbReference type="NCBI Taxonomy" id="160492"/>
    <lineage>
        <taxon>Bacteria</taxon>
        <taxon>Pseudomonadati</taxon>
        <taxon>Pseudomonadota</taxon>
        <taxon>Gammaproteobacteria</taxon>
        <taxon>Lysobacterales</taxon>
        <taxon>Lysobacteraceae</taxon>
        <taxon>Xylella</taxon>
    </lineage>
</organism>
<reference key="1">
    <citation type="journal article" date="2000" name="Nature">
        <title>The genome sequence of the plant pathogen Xylella fastidiosa.</title>
        <authorList>
            <person name="Simpson A.J.G."/>
            <person name="Reinach F.C."/>
            <person name="Arruda P."/>
            <person name="Abreu F.A."/>
            <person name="Acencio M."/>
            <person name="Alvarenga R."/>
            <person name="Alves L.M.C."/>
            <person name="Araya J.E."/>
            <person name="Baia G.S."/>
            <person name="Baptista C.S."/>
            <person name="Barros M.H."/>
            <person name="Bonaccorsi E.D."/>
            <person name="Bordin S."/>
            <person name="Bove J.M."/>
            <person name="Briones M.R.S."/>
            <person name="Bueno M.R.P."/>
            <person name="Camargo A.A."/>
            <person name="Camargo L.E.A."/>
            <person name="Carraro D.M."/>
            <person name="Carrer H."/>
            <person name="Colauto N.B."/>
            <person name="Colombo C."/>
            <person name="Costa F.F."/>
            <person name="Costa M.C.R."/>
            <person name="Costa-Neto C.M."/>
            <person name="Coutinho L.L."/>
            <person name="Cristofani M."/>
            <person name="Dias-Neto E."/>
            <person name="Docena C."/>
            <person name="El-Dorry H."/>
            <person name="Facincani A.P."/>
            <person name="Ferreira A.J.S."/>
            <person name="Ferreira V.C.A."/>
            <person name="Ferro J.A."/>
            <person name="Fraga J.S."/>
            <person name="Franca S.C."/>
            <person name="Franco M.C."/>
            <person name="Frohme M."/>
            <person name="Furlan L.R."/>
            <person name="Garnier M."/>
            <person name="Goldman G.H."/>
            <person name="Goldman M.H.S."/>
            <person name="Gomes S.L."/>
            <person name="Gruber A."/>
            <person name="Ho P.L."/>
            <person name="Hoheisel J.D."/>
            <person name="Junqueira M.L."/>
            <person name="Kemper E.L."/>
            <person name="Kitajima J.P."/>
            <person name="Krieger J.E."/>
            <person name="Kuramae E.E."/>
            <person name="Laigret F."/>
            <person name="Lambais M.R."/>
            <person name="Leite L.C.C."/>
            <person name="Lemos E.G.M."/>
            <person name="Lemos M.V.F."/>
            <person name="Lopes S.A."/>
            <person name="Lopes C.R."/>
            <person name="Machado J.A."/>
            <person name="Machado M.A."/>
            <person name="Madeira A.M.B.N."/>
            <person name="Madeira H.M.F."/>
            <person name="Marino C.L."/>
            <person name="Marques M.V."/>
            <person name="Martins E.A.L."/>
            <person name="Martins E.M.F."/>
            <person name="Matsukuma A.Y."/>
            <person name="Menck C.F.M."/>
            <person name="Miracca E.C."/>
            <person name="Miyaki C.Y."/>
            <person name="Monteiro-Vitorello C.B."/>
            <person name="Moon D.H."/>
            <person name="Nagai M.A."/>
            <person name="Nascimento A.L.T.O."/>
            <person name="Netto L.E.S."/>
            <person name="Nhani A. Jr."/>
            <person name="Nobrega F.G."/>
            <person name="Nunes L.R."/>
            <person name="Oliveira M.A."/>
            <person name="de Oliveira M.C."/>
            <person name="de Oliveira R.C."/>
            <person name="Palmieri D.A."/>
            <person name="Paris A."/>
            <person name="Peixoto B.R."/>
            <person name="Pereira G.A.G."/>
            <person name="Pereira H.A. Jr."/>
            <person name="Pesquero J.B."/>
            <person name="Quaggio R.B."/>
            <person name="Roberto P.G."/>
            <person name="Rodrigues V."/>
            <person name="de Rosa A.J.M."/>
            <person name="de Rosa V.E. Jr."/>
            <person name="de Sa R.G."/>
            <person name="Santelli R.V."/>
            <person name="Sawasaki H.E."/>
            <person name="da Silva A.C.R."/>
            <person name="da Silva A.M."/>
            <person name="da Silva F.R."/>
            <person name="Silva W.A. Jr."/>
            <person name="da Silveira J.F."/>
            <person name="Silvestri M.L.Z."/>
            <person name="Siqueira W.J."/>
            <person name="de Souza A.A."/>
            <person name="de Souza A.P."/>
            <person name="Terenzi M.F."/>
            <person name="Truffi D."/>
            <person name="Tsai S.M."/>
            <person name="Tsuhako M.H."/>
            <person name="Vallada H."/>
            <person name="Van Sluys M.A."/>
            <person name="Verjovski-Almeida S."/>
            <person name="Vettore A.L."/>
            <person name="Zago M.A."/>
            <person name="Zatz M."/>
            <person name="Meidanis J."/>
            <person name="Setubal J.C."/>
        </authorList>
    </citation>
    <scope>NUCLEOTIDE SEQUENCE [LARGE SCALE GENOMIC DNA]</scope>
    <source>
        <strain>9a5c</strain>
    </source>
</reference>
<proteinExistence type="inferred from homology"/>
<evidence type="ECO:0000255" key="1">
    <source>
        <dbReference type="HAMAP-Rule" id="MF_01306"/>
    </source>
</evidence>
<evidence type="ECO:0000305" key="2"/>
<keyword id="KW-0687">Ribonucleoprotein</keyword>
<keyword id="KW-0689">Ribosomal protein</keyword>
<keyword id="KW-0694">RNA-binding</keyword>
<keyword id="KW-0699">rRNA-binding</keyword>
<feature type="chain" id="PRO_0000132498" description="Small ribosomal subunit protein uS4">
    <location>
        <begin position="1"/>
        <end position="208"/>
    </location>
</feature>
<feature type="domain" description="S4 RNA-binding" evidence="1">
    <location>
        <begin position="97"/>
        <end position="158"/>
    </location>
</feature>
<accession>Q9PE53</accession>
<sequence length="208" mass="23542">MARYIGPSCKLARREGADLSLKSPSRALDSKCKLEQRPGQHGAVRKSKLSDYASQLREKQKVKRIYGVLERQFRNYYKNASTKKGNTGENLLQLLETRLDNVIYRMGFAVTRPAARQLVSHRRVLVNGKLVNLPSYHVKPGDVVALSQRAQKYLCVQESLTIKDQHGSAFSWVEVDSEKFSGVFKAFPDRADLPSDINEALIVELYSK</sequence>
<dbReference type="EMBL" id="AE003849">
    <property type="protein sequence ID" value="AAF83985.1"/>
    <property type="molecule type" value="Genomic_DNA"/>
</dbReference>
<dbReference type="PIR" id="H82714">
    <property type="entry name" value="H82714"/>
</dbReference>
<dbReference type="RefSeq" id="WP_010893688.1">
    <property type="nucleotide sequence ID" value="NC_002488.3"/>
</dbReference>
<dbReference type="SMR" id="Q9PE53"/>
<dbReference type="STRING" id="160492.XF_1175"/>
<dbReference type="KEGG" id="xfa:XF_1175"/>
<dbReference type="eggNOG" id="COG0522">
    <property type="taxonomic scope" value="Bacteria"/>
</dbReference>
<dbReference type="HOGENOM" id="CLU_092403_0_2_6"/>
<dbReference type="Proteomes" id="UP000000812">
    <property type="component" value="Chromosome"/>
</dbReference>
<dbReference type="GO" id="GO:0015935">
    <property type="term" value="C:small ribosomal subunit"/>
    <property type="evidence" value="ECO:0007669"/>
    <property type="project" value="InterPro"/>
</dbReference>
<dbReference type="GO" id="GO:0019843">
    <property type="term" value="F:rRNA binding"/>
    <property type="evidence" value="ECO:0007669"/>
    <property type="project" value="UniProtKB-UniRule"/>
</dbReference>
<dbReference type="GO" id="GO:0003735">
    <property type="term" value="F:structural constituent of ribosome"/>
    <property type="evidence" value="ECO:0007669"/>
    <property type="project" value="InterPro"/>
</dbReference>
<dbReference type="GO" id="GO:0042274">
    <property type="term" value="P:ribosomal small subunit biogenesis"/>
    <property type="evidence" value="ECO:0007669"/>
    <property type="project" value="TreeGrafter"/>
</dbReference>
<dbReference type="GO" id="GO:0006412">
    <property type="term" value="P:translation"/>
    <property type="evidence" value="ECO:0007669"/>
    <property type="project" value="UniProtKB-UniRule"/>
</dbReference>
<dbReference type="CDD" id="cd00165">
    <property type="entry name" value="S4"/>
    <property type="match status" value="1"/>
</dbReference>
<dbReference type="FunFam" id="1.10.1050.10:FF:000001">
    <property type="entry name" value="30S ribosomal protein S4"/>
    <property type="match status" value="1"/>
</dbReference>
<dbReference type="FunFam" id="3.10.290.10:FF:000001">
    <property type="entry name" value="30S ribosomal protein S4"/>
    <property type="match status" value="1"/>
</dbReference>
<dbReference type="Gene3D" id="1.10.1050.10">
    <property type="entry name" value="Ribosomal Protein S4 Delta 41, Chain A, domain 1"/>
    <property type="match status" value="1"/>
</dbReference>
<dbReference type="Gene3D" id="3.10.290.10">
    <property type="entry name" value="RNA-binding S4 domain"/>
    <property type="match status" value="1"/>
</dbReference>
<dbReference type="HAMAP" id="MF_01306_B">
    <property type="entry name" value="Ribosomal_uS4_B"/>
    <property type="match status" value="1"/>
</dbReference>
<dbReference type="InterPro" id="IPR022801">
    <property type="entry name" value="Ribosomal_uS4"/>
</dbReference>
<dbReference type="InterPro" id="IPR005709">
    <property type="entry name" value="Ribosomal_uS4_bac-type"/>
</dbReference>
<dbReference type="InterPro" id="IPR018079">
    <property type="entry name" value="Ribosomal_uS4_CS"/>
</dbReference>
<dbReference type="InterPro" id="IPR001912">
    <property type="entry name" value="Ribosomal_uS4_N"/>
</dbReference>
<dbReference type="InterPro" id="IPR002942">
    <property type="entry name" value="S4_RNA-bd"/>
</dbReference>
<dbReference type="InterPro" id="IPR036986">
    <property type="entry name" value="S4_RNA-bd_sf"/>
</dbReference>
<dbReference type="NCBIfam" id="NF003717">
    <property type="entry name" value="PRK05327.1"/>
    <property type="match status" value="1"/>
</dbReference>
<dbReference type="NCBIfam" id="TIGR01017">
    <property type="entry name" value="rpsD_bact"/>
    <property type="match status" value="1"/>
</dbReference>
<dbReference type="PANTHER" id="PTHR11831">
    <property type="entry name" value="30S 40S RIBOSOMAL PROTEIN"/>
    <property type="match status" value="1"/>
</dbReference>
<dbReference type="PANTHER" id="PTHR11831:SF4">
    <property type="entry name" value="SMALL RIBOSOMAL SUBUNIT PROTEIN US4M"/>
    <property type="match status" value="1"/>
</dbReference>
<dbReference type="Pfam" id="PF00163">
    <property type="entry name" value="Ribosomal_S4"/>
    <property type="match status" value="1"/>
</dbReference>
<dbReference type="Pfam" id="PF01479">
    <property type="entry name" value="S4"/>
    <property type="match status" value="1"/>
</dbReference>
<dbReference type="SMART" id="SM01390">
    <property type="entry name" value="Ribosomal_S4"/>
    <property type="match status" value="1"/>
</dbReference>
<dbReference type="SMART" id="SM00363">
    <property type="entry name" value="S4"/>
    <property type="match status" value="1"/>
</dbReference>
<dbReference type="SUPFAM" id="SSF55174">
    <property type="entry name" value="Alpha-L RNA-binding motif"/>
    <property type="match status" value="1"/>
</dbReference>
<dbReference type="PROSITE" id="PS00632">
    <property type="entry name" value="RIBOSOMAL_S4"/>
    <property type="match status" value="1"/>
</dbReference>
<dbReference type="PROSITE" id="PS50889">
    <property type="entry name" value="S4"/>
    <property type="match status" value="1"/>
</dbReference>
<comment type="function">
    <text evidence="1">One of the primary rRNA binding proteins, it binds directly to 16S rRNA where it nucleates assembly of the body of the 30S subunit.</text>
</comment>
<comment type="function">
    <text evidence="1">With S5 and S12 plays an important role in translational accuracy.</text>
</comment>
<comment type="subunit">
    <text evidence="1">Part of the 30S ribosomal subunit. Contacts protein S5. The interaction surface between S4 and S5 is involved in control of translational fidelity.</text>
</comment>
<comment type="similarity">
    <text evidence="1">Belongs to the universal ribosomal protein uS4 family.</text>
</comment>
<protein>
    <recommendedName>
        <fullName evidence="1">Small ribosomal subunit protein uS4</fullName>
    </recommendedName>
    <alternativeName>
        <fullName evidence="2">30S ribosomal protein S4</fullName>
    </alternativeName>
</protein>
<name>RS4_XYLFA</name>
<gene>
    <name evidence="1" type="primary">rpsD</name>
    <name type="ordered locus">XF_1175</name>
</gene>